<reference key="1">
    <citation type="journal article" date="2008" name="Chem. Biol. Interact.">
        <title>Extending the Bacillus cereus group genomics to putative food-borne pathogens of different toxicity.</title>
        <authorList>
            <person name="Lapidus A."/>
            <person name="Goltsman E."/>
            <person name="Auger S."/>
            <person name="Galleron N."/>
            <person name="Segurens B."/>
            <person name="Dossat C."/>
            <person name="Land M.L."/>
            <person name="Broussolle V."/>
            <person name="Brillard J."/>
            <person name="Guinebretiere M.-H."/>
            <person name="Sanchis V."/>
            <person name="Nguen-the C."/>
            <person name="Lereclus D."/>
            <person name="Richardson P."/>
            <person name="Wincker P."/>
            <person name="Weissenbach J."/>
            <person name="Ehrlich S.D."/>
            <person name="Sorokin A."/>
        </authorList>
    </citation>
    <scope>NUCLEOTIDE SEQUENCE [LARGE SCALE GENOMIC DNA]</scope>
    <source>
        <strain>DSM 22905 / CIP 110041 / 391-98 / NVH 391-98</strain>
    </source>
</reference>
<comment type="function">
    <text evidence="1">One of the essential components for the initiation of protein synthesis. Stabilizes the binding of IF-2 and IF-3 on the 30S subunit to which N-formylmethionyl-tRNA(fMet) subsequently binds. Helps modulate mRNA selection, yielding the 30S pre-initiation complex (PIC). Upon addition of the 50S ribosomal subunit IF-1, IF-2 and IF-3 are released leaving the mature 70S translation initiation complex.</text>
</comment>
<comment type="subunit">
    <text evidence="1">Component of the 30S ribosomal translation pre-initiation complex which assembles on the 30S ribosome in the order IF-2 and IF-3, IF-1 and N-formylmethionyl-tRNA(fMet); mRNA recruitment can occur at any time during PIC assembly.</text>
</comment>
<comment type="subcellular location">
    <subcellularLocation>
        <location evidence="1">Cytoplasm</location>
    </subcellularLocation>
</comment>
<comment type="similarity">
    <text evidence="1">Belongs to the IF-1 family.</text>
</comment>
<keyword id="KW-0963">Cytoplasm</keyword>
<keyword id="KW-0396">Initiation factor</keyword>
<keyword id="KW-0597">Phosphoprotein</keyword>
<keyword id="KW-0648">Protein biosynthesis</keyword>
<keyword id="KW-0694">RNA-binding</keyword>
<keyword id="KW-0699">rRNA-binding</keyword>
<accession>A7GK43</accession>
<evidence type="ECO:0000255" key="1">
    <source>
        <dbReference type="HAMAP-Rule" id="MF_00075"/>
    </source>
</evidence>
<organism>
    <name type="scientific">Bacillus cytotoxicus (strain DSM 22905 / CIP 110041 / 391-98 / NVH 391-98)</name>
    <dbReference type="NCBI Taxonomy" id="315749"/>
    <lineage>
        <taxon>Bacteria</taxon>
        <taxon>Bacillati</taxon>
        <taxon>Bacillota</taxon>
        <taxon>Bacilli</taxon>
        <taxon>Bacillales</taxon>
        <taxon>Bacillaceae</taxon>
        <taxon>Bacillus</taxon>
        <taxon>Bacillus cereus group</taxon>
    </lineage>
</organism>
<protein>
    <recommendedName>
        <fullName evidence="1">Translation initiation factor IF-1</fullName>
    </recommendedName>
</protein>
<name>IF1_BACCN</name>
<proteinExistence type="inferred from homology"/>
<gene>
    <name evidence="1" type="primary">infA</name>
    <name type="ordered locus">Bcer98_0127</name>
</gene>
<dbReference type="EMBL" id="CP000764">
    <property type="protein sequence ID" value="ABS20501.1"/>
    <property type="molecule type" value="Genomic_DNA"/>
</dbReference>
<dbReference type="RefSeq" id="WP_001029884.1">
    <property type="nucleotide sequence ID" value="NC_009674.1"/>
</dbReference>
<dbReference type="SMR" id="A7GK43"/>
<dbReference type="STRING" id="315749.Bcer98_0127"/>
<dbReference type="GeneID" id="93010920"/>
<dbReference type="KEGG" id="bcy:Bcer98_0127"/>
<dbReference type="eggNOG" id="COG0361">
    <property type="taxonomic scope" value="Bacteria"/>
</dbReference>
<dbReference type="HOGENOM" id="CLU_151267_1_0_9"/>
<dbReference type="OrthoDB" id="9803250at2"/>
<dbReference type="Proteomes" id="UP000002300">
    <property type="component" value="Chromosome"/>
</dbReference>
<dbReference type="GO" id="GO:0005829">
    <property type="term" value="C:cytosol"/>
    <property type="evidence" value="ECO:0007669"/>
    <property type="project" value="TreeGrafter"/>
</dbReference>
<dbReference type="GO" id="GO:0043022">
    <property type="term" value="F:ribosome binding"/>
    <property type="evidence" value="ECO:0007669"/>
    <property type="project" value="UniProtKB-UniRule"/>
</dbReference>
<dbReference type="GO" id="GO:0019843">
    <property type="term" value="F:rRNA binding"/>
    <property type="evidence" value="ECO:0007669"/>
    <property type="project" value="UniProtKB-UniRule"/>
</dbReference>
<dbReference type="GO" id="GO:0003743">
    <property type="term" value="F:translation initiation factor activity"/>
    <property type="evidence" value="ECO:0007669"/>
    <property type="project" value="UniProtKB-UniRule"/>
</dbReference>
<dbReference type="CDD" id="cd04451">
    <property type="entry name" value="S1_IF1"/>
    <property type="match status" value="1"/>
</dbReference>
<dbReference type="FunFam" id="2.40.50.140:FF:000002">
    <property type="entry name" value="Translation initiation factor IF-1"/>
    <property type="match status" value="1"/>
</dbReference>
<dbReference type="Gene3D" id="2.40.50.140">
    <property type="entry name" value="Nucleic acid-binding proteins"/>
    <property type="match status" value="1"/>
</dbReference>
<dbReference type="HAMAP" id="MF_00075">
    <property type="entry name" value="IF_1"/>
    <property type="match status" value="1"/>
</dbReference>
<dbReference type="InterPro" id="IPR012340">
    <property type="entry name" value="NA-bd_OB-fold"/>
</dbReference>
<dbReference type="InterPro" id="IPR006196">
    <property type="entry name" value="RNA-binding_domain_S1_IF1"/>
</dbReference>
<dbReference type="InterPro" id="IPR003029">
    <property type="entry name" value="S1_domain"/>
</dbReference>
<dbReference type="InterPro" id="IPR004368">
    <property type="entry name" value="TIF_IF1"/>
</dbReference>
<dbReference type="NCBIfam" id="TIGR00008">
    <property type="entry name" value="infA"/>
    <property type="match status" value="1"/>
</dbReference>
<dbReference type="PANTHER" id="PTHR33370">
    <property type="entry name" value="TRANSLATION INITIATION FACTOR IF-1, CHLOROPLASTIC"/>
    <property type="match status" value="1"/>
</dbReference>
<dbReference type="PANTHER" id="PTHR33370:SF1">
    <property type="entry name" value="TRANSLATION INITIATION FACTOR IF-1, CHLOROPLASTIC"/>
    <property type="match status" value="1"/>
</dbReference>
<dbReference type="Pfam" id="PF01176">
    <property type="entry name" value="eIF-1a"/>
    <property type="match status" value="1"/>
</dbReference>
<dbReference type="SMART" id="SM00316">
    <property type="entry name" value="S1"/>
    <property type="match status" value="1"/>
</dbReference>
<dbReference type="SUPFAM" id="SSF50249">
    <property type="entry name" value="Nucleic acid-binding proteins"/>
    <property type="match status" value="1"/>
</dbReference>
<dbReference type="PROSITE" id="PS50832">
    <property type="entry name" value="S1_IF1_TYPE"/>
    <property type="match status" value="1"/>
</dbReference>
<sequence>MAKDDVIEVEGTVLETLPNAMFKVELENGHVVLAHVSGKIRMNFIRILPGDKVTVELSPYDLNRGRITYRFK</sequence>
<feature type="chain" id="PRO_0000338766" description="Translation initiation factor IF-1">
    <location>
        <begin position="1"/>
        <end position="72"/>
    </location>
</feature>
<feature type="domain" description="S1-like" evidence="1">
    <location>
        <begin position="1"/>
        <end position="72"/>
    </location>
</feature>
<feature type="modified residue" description="Phosphotyrosine" evidence="1">
    <location>
        <position position="60"/>
    </location>
</feature>